<sequence>MKSASIPIYLQQAIMNTLRQKLQQANLYLNRDFPEPTINYRQRGTTAGSAYIKNWEIRLNPVLLIENQQAFIDEVVPHELAHLLVYRYFGKVPPHGKQWRWMMEEVLNVPANRTHKFKIDSVRSQTFTYYCNCQQHELTLRRHNKILRGESHYICQKCGEKLIAKSIDSLNPNLYPMDFKMHRGGKGVNPREHR</sequence>
<proteinExistence type="inferred from homology"/>
<gene>
    <name type="primary">sprT</name>
    <name type="ordered locus">plu3684</name>
</gene>
<dbReference type="EMBL" id="BX571871">
    <property type="protein sequence ID" value="CAE16057.1"/>
    <property type="molecule type" value="Genomic_DNA"/>
</dbReference>
<dbReference type="RefSeq" id="WP_011147847.1">
    <property type="nucleotide sequence ID" value="NC_005126.1"/>
</dbReference>
<dbReference type="STRING" id="243265.plu3684"/>
<dbReference type="KEGG" id="plu:plu3684"/>
<dbReference type="eggNOG" id="COG3091">
    <property type="taxonomic scope" value="Bacteria"/>
</dbReference>
<dbReference type="HOGENOM" id="CLU_113336_0_1_6"/>
<dbReference type="OrthoDB" id="267364at2"/>
<dbReference type="Proteomes" id="UP000002514">
    <property type="component" value="Chromosome"/>
</dbReference>
<dbReference type="GO" id="GO:0005737">
    <property type="term" value="C:cytoplasm"/>
    <property type="evidence" value="ECO:0007669"/>
    <property type="project" value="UniProtKB-SubCell"/>
</dbReference>
<dbReference type="GO" id="GO:0008270">
    <property type="term" value="F:zinc ion binding"/>
    <property type="evidence" value="ECO:0007669"/>
    <property type="project" value="UniProtKB-UniRule"/>
</dbReference>
<dbReference type="GO" id="GO:0006950">
    <property type="term" value="P:response to stress"/>
    <property type="evidence" value="ECO:0007669"/>
    <property type="project" value="UniProtKB-ARBA"/>
</dbReference>
<dbReference type="Gene3D" id="3.30.2010.10">
    <property type="entry name" value="Metalloproteases ('zincins'), catalytic domain"/>
    <property type="match status" value="1"/>
</dbReference>
<dbReference type="HAMAP" id="MF_00746">
    <property type="entry name" value="SprT"/>
    <property type="match status" value="1"/>
</dbReference>
<dbReference type="InterPro" id="IPR006640">
    <property type="entry name" value="SprT-like_domain"/>
</dbReference>
<dbReference type="InterPro" id="IPR035240">
    <property type="entry name" value="SprT_Zn_ribbon"/>
</dbReference>
<dbReference type="InterPro" id="IPR023483">
    <property type="entry name" value="Uncharacterised_SprT"/>
</dbReference>
<dbReference type="NCBIfam" id="NF003421">
    <property type="entry name" value="PRK04860.1"/>
    <property type="match status" value="1"/>
</dbReference>
<dbReference type="PANTHER" id="PTHR38773">
    <property type="entry name" value="PROTEIN SPRT"/>
    <property type="match status" value="1"/>
</dbReference>
<dbReference type="PANTHER" id="PTHR38773:SF1">
    <property type="entry name" value="PROTEIN SPRT"/>
    <property type="match status" value="1"/>
</dbReference>
<dbReference type="Pfam" id="PF10263">
    <property type="entry name" value="SprT-like"/>
    <property type="match status" value="1"/>
</dbReference>
<dbReference type="Pfam" id="PF17283">
    <property type="entry name" value="Zn_ribbon_SprT"/>
    <property type="match status" value="1"/>
</dbReference>
<dbReference type="SMART" id="SM00731">
    <property type="entry name" value="SprT"/>
    <property type="match status" value="1"/>
</dbReference>
<dbReference type="PROSITE" id="PS00142">
    <property type="entry name" value="ZINC_PROTEASE"/>
    <property type="match status" value="1"/>
</dbReference>
<reference key="1">
    <citation type="journal article" date="2003" name="Nat. Biotechnol.">
        <title>The genome sequence of the entomopathogenic bacterium Photorhabdus luminescens.</title>
        <authorList>
            <person name="Duchaud E."/>
            <person name="Rusniok C."/>
            <person name="Frangeul L."/>
            <person name="Buchrieser C."/>
            <person name="Givaudan A."/>
            <person name="Taourit S."/>
            <person name="Bocs S."/>
            <person name="Boursaux-Eude C."/>
            <person name="Chandler M."/>
            <person name="Charles J.-F."/>
            <person name="Dassa E."/>
            <person name="Derose R."/>
            <person name="Derzelle S."/>
            <person name="Freyssinet G."/>
            <person name="Gaudriault S."/>
            <person name="Medigue C."/>
            <person name="Lanois A."/>
            <person name="Powell K."/>
            <person name="Siguier P."/>
            <person name="Vincent R."/>
            <person name="Wingate V."/>
            <person name="Zouine M."/>
            <person name="Glaser P."/>
            <person name="Boemare N."/>
            <person name="Danchin A."/>
            <person name="Kunst F."/>
        </authorList>
    </citation>
    <scope>NUCLEOTIDE SEQUENCE [LARGE SCALE GENOMIC DNA]</scope>
    <source>
        <strain>DSM 15139 / CIP 105565 / TT01</strain>
    </source>
</reference>
<comment type="cofactor">
    <cofactor evidence="2">
        <name>Zn(2+)</name>
        <dbReference type="ChEBI" id="CHEBI:29105"/>
    </cofactor>
    <text evidence="2">Binds 1 zinc ion.</text>
</comment>
<comment type="subcellular location">
    <subcellularLocation>
        <location evidence="2">Cytoplasm</location>
    </subcellularLocation>
</comment>
<comment type="similarity">
    <text evidence="2">Belongs to the SprT family.</text>
</comment>
<name>SPRT_PHOLL</name>
<feature type="chain" id="PRO_0000213272" description="Protein SprT">
    <location>
        <begin position="1"/>
        <end position="194"/>
    </location>
</feature>
<feature type="domain" description="SprT-like">
    <location>
        <begin position="20"/>
        <end position="163"/>
    </location>
</feature>
<feature type="active site" evidence="1">
    <location>
        <position position="79"/>
    </location>
</feature>
<feature type="binding site" evidence="1">
    <location>
        <position position="78"/>
    </location>
    <ligand>
        <name>Zn(2+)</name>
        <dbReference type="ChEBI" id="CHEBI:29105"/>
    </ligand>
</feature>
<feature type="binding site" evidence="1">
    <location>
        <position position="82"/>
    </location>
    <ligand>
        <name>Zn(2+)</name>
        <dbReference type="ChEBI" id="CHEBI:29105"/>
    </ligand>
</feature>
<protein>
    <recommendedName>
        <fullName>Protein SprT</fullName>
    </recommendedName>
</protein>
<organism>
    <name type="scientific">Photorhabdus laumondii subsp. laumondii (strain DSM 15139 / CIP 105565 / TT01)</name>
    <name type="common">Photorhabdus luminescens subsp. laumondii</name>
    <dbReference type="NCBI Taxonomy" id="243265"/>
    <lineage>
        <taxon>Bacteria</taxon>
        <taxon>Pseudomonadati</taxon>
        <taxon>Pseudomonadota</taxon>
        <taxon>Gammaproteobacteria</taxon>
        <taxon>Enterobacterales</taxon>
        <taxon>Morganellaceae</taxon>
        <taxon>Photorhabdus</taxon>
    </lineage>
</organism>
<keyword id="KW-0963">Cytoplasm</keyword>
<keyword id="KW-0479">Metal-binding</keyword>
<keyword id="KW-1185">Reference proteome</keyword>
<keyword id="KW-0862">Zinc</keyword>
<evidence type="ECO:0000255" key="1"/>
<evidence type="ECO:0000305" key="2"/>
<accession>Q7N118</accession>